<comment type="function">
    <text evidence="1 2">Transcriptional regulator. Involved in the initiation of neuronal differentiation. Activates transcription by binding to the E box (5'-CANNTG-3') (By similarity). May be involved in the functional network that regulates the development of the GnRH axis (By similarity).</text>
</comment>
<comment type="subunit">
    <text evidence="1 2">Efficient DNA binding requires dimerization with another bHLH protein. Forms homo- or heterooligomers with myogenin, E12 and ITF2 proteins. Interacts with PTF1A. Interacts with RUNX1T1. Interacts with NEUROD2 (By similarity). Interacts with BHLHA9.</text>
</comment>
<comment type="subcellular location">
    <subcellularLocation>
        <location>Nucleus</location>
    </subcellularLocation>
</comment>
<protein>
    <recommendedName>
        <fullName>Transcription factor 12</fullName>
        <shortName>TCF-12</shortName>
    </recommendedName>
    <alternativeName>
        <fullName>DNA-binding protein HTF4</fullName>
    </alternativeName>
    <alternativeName>
        <fullName>E-box-binding protein</fullName>
    </alternativeName>
    <alternativeName>
        <fullName>Transcription factor HTF-4</fullName>
    </alternativeName>
</protein>
<name>HTF4_PAPHA</name>
<feature type="chain" id="PRO_0000127231" description="Transcription factor 12">
    <location>
        <begin position="1" status="less than"/>
        <end position="160"/>
    </location>
</feature>
<feature type="domain" description="bHLH" evidence="3">
    <location>
        <begin position="55"/>
        <end position="108"/>
    </location>
</feature>
<feature type="region of interest" description="Disordered" evidence="4">
    <location>
        <begin position="1"/>
        <end position="58"/>
    </location>
</feature>
<feature type="region of interest" description="Class A specific domain">
    <location>
        <begin position="110"/>
        <end position="133"/>
    </location>
</feature>
<feature type="region of interest" description="Disordered" evidence="4">
    <location>
        <begin position="132"/>
        <end position="160"/>
    </location>
</feature>
<feature type="compositionally biased region" description="Basic and acidic residues" evidence="4">
    <location>
        <begin position="15"/>
        <end position="30"/>
    </location>
</feature>
<feature type="compositionally biased region" description="Basic and acidic residues" evidence="4">
    <location>
        <begin position="46"/>
        <end position="58"/>
    </location>
</feature>
<feature type="compositionally biased region" description="Low complexity" evidence="4">
    <location>
        <begin position="139"/>
        <end position="150"/>
    </location>
</feature>
<feature type="compositionally biased region" description="Polar residues" evidence="4">
    <location>
        <begin position="151"/>
        <end position="160"/>
    </location>
</feature>
<feature type="modified residue" description="Phosphoserine" evidence="2">
    <location>
        <position position="19"/>
    </location>
</feature>
<feature type="modified residue" description="Phosphothreonine" evidence="2">
    <location>
        <position position="36"/>
    </location>
</feature>
<feature type="modified residue" description="Phosphoserine" evidence="2">
    <location>
        <position position="37"/>
    </location>
</feature>
<feature type="cross-link" description="Glycyl lysine isopeptide (Lys-Gly) (interchain with G-Cter in SUMO2)" evidence="2">
    <location>
        <position position="29"/>
    </location>
</feature>
<feature type="cross-link" description="Glycyl lysine isopeptide (Lys-Gly) (interchain with G-Cter in SUMO2)" evidence="2">
    <location>
        <position position="87"/>
    </location>
</feature>
<feature type="cross-link" description="Glycyl lysine isopeptide (Lys-Gly) (interchain with G-Cter in SUMO2)" evidence="2">
    <location>
        <position position="131"/>
    </location>
</feature>
<feature type="non-terminal residue">
    <location>
        <position position="1"/>
    </location>
</feature>
<accession>Q28772</accession>
<sequence length="160" mass="18302">NKEKDENLHEPPSSDDMKSDDESSQKDIKVSSRGRTSTNEDEDLNPEQKIEREKERRMANNARERLRVRDINEAFKELGRMCQLHLKSEKPQTKLLILHQAVAVILSLEQQVRERNLNPKAACLKRREEEKVSVVSAEPPTTLPGTHPGLSETTNPMGHM</sequence>
<proteinExistence type="evidence at transcript level"/>
<keyword id="KW-0217">Developmental protein</keyword>
<keyword id="KW-0221">Differentiation</keyword>
<keyword id="KW-0238">DNA-binding</keyword>
<keyword id="KW-1017">Isopeptide bond</keyword>
<keyword id="KW-0524">Neurogenesis</keyword>
<keyword id="KW-0539">Nucleus</keyword>
<keyword id="KW-0597">Phosphoprotein</keyword>
<keyword id="KW-0804">Transcription</keyword>
<keyword id="KW-0805">Transcription regulation</keyword>
<keyword id="KW-0832">Ubl conjugation</keyword>
<organism>
    <name type="scientific">Papio hamadryas</name>
    <name type="common">Hamadryas baboon</name>
    <dbReference type="NCBI Taxonomy" id="9557"/>
    <lineage>
        <taxon>Eukaryota</taxon>
        <taxon>Metazoa</taxon>
        <taxon>Chordata</taxon>
        <taxon>Craniata</taxon>
        <taxon>Vertebrata</taxon>
        <taxon>Euteleostomi</taxon>
        <taxon>Mammalia</taxon>
        <taxon>Eutheria</taxon>
        <taxon>Euarchontoglires</taxon>
        <taxon>Primates</taxon>
        <taxon>Haplorrhini</taxon>
        <taxon>Catarrhini</taxon>
        <taxon>Cercopithecidae</taxon>
        <taxon>Cercopithecinae</taxon>
        <taxon>Papio</taxon>
    </lineage>
</organism>
<reference key="1">
    <citation type="journal article" date="1997" name="Mol. Cell. Biol.">
        <title>Interplay of the E box, the cyclic AMP response element, and HTF4/HEB in transcriptional regulation of the neurospecific, neurotrophin-inducible vgf gene.</title>
        <authorList>
            <person name="di Rocco G."/>
            <person name="Pennuto M."/>
            <person name="Illi B."/>
            <person name="Canu N."/>
            <person name="Filocamo G."/>
            <person name="Trani E."/>
            <person name="Rinaldi A.M."/>
            <person name="Possenti R."/>
            <person name="Mandolesi G."/>
            <person name="Sirinian M.I."/>
            <person name="Jucker R."/>
            <person name="Levi A."/>
            <person name="Nasi S."/>
        </authorList>
    </citation>
    <scope>NUCLEOTIDE SEQUENCE [MRNA]</scope>
    <source>
        <tissue>Lymphoid tissue</tissue>
    </source>
</reference>
<evidence type="ECO:0000250" key="1">
    <source>
        <dbReference type="UniProtKB" id="Q61286"/>
    </source>
</evidence>
<evidence type="ECO:0000250" key="2">
    <source>
        <dbReference type="UniProtKB" id="Q99081"/>
    </source>
</evidence>
<evidence type="ECO:0000255" key="3">
    <source>
        <dbReference type="PROSITE-ProRule" id="PRU00981"/>
    </source>
</evidence>
<evidence type="ECO:0000256" key="4">
    <source>
        <dbReference type="SAM" id="MobiDB-lite"/>
    </source>
</evidence>
<gene>
    <name type="primary">TCF12</name>
    <name type="synonym">HTF4</name>
</gene>
<dbReference type="EMBL" id="X97234">
    <property type="protein sequence ID" value="CAA65873.1"/>
    <property type="molecule type" value="mRNA"/>
</dbReference>
<dbReference type="GO" id="GO:0000785">
    <property type="term" value="C:chromatin"/>
    <property type="evidence" value="ECO:0007669"/>
    <property type="project" value="TreeGrafter"/>
</dbReference>
<dbReference type="GO" id="GO:0005634">
    <property type="term" value="C:nucleus"/>
    <property type="evidence" value="ECO:0007669"/>
    <property type="project" value="UniProtKB-SubCell"/>
</dbReference>
<dbReference type="GO" id="GO:0005667">
    <property type="term" value="C:transcription regulator complex"/>
    <property type="evidence" value="ECO:0007669"/>
    <property type="project" value="TreeGrafter"/>
</dbReference>
<dbReference type="GO" id="GO:0000981">
    <property type="term" value="F:DNA-binding transcription factor activity, RNA polymerase II-specific"/>
    <property type="evidence" value="ECO:0007669"/>
    <property type="project" value="TreeGrafter"/>
</dbReference>
<dbReference type="GO" id="GO:0070888">
    <property type="term" value="F:E-box binding"/>
    <property type="evidence" value="ECO:0000250"/>
    <property type="project" value="UniProtKB"/>
</dbReference>
<dbReference type="GO" id="GO:0046982">
    <property type="term" value="F:protein heterodimerization activity"/>
    <property type="evidence" value="ECO:0000250"/>
    <property type="project" value="UniProtKB"/>
</dbReference>
<dbReference type="GO" id="GO:0030154">
    <property type="term" value="P:cell differentiation"/>
    <property type="evidence" value="ECO:0007669"/>
    <property type="project" value="UniProtKB-KW"/>
</dbReference>
<dbReference type="GO" id="GO:0007399">
    <property type="term" value="P:nervous system development"/>
    <property type="evidence" value="ECO:0007669"/>
    <property type="project" value="UniProtKB-KW"/>
</dbReference>
<dbReference type="GO" id="GO:0045893">
    <property type="term" value="P:positive regulation of DNA-templated transcription"/>
    <property type="evidence" value="ECO:0007669"/>
    <property type="project" value="UniProtKB-ARBA"/>
</dbReference>
<dbReference type="GO" id="GO:0045666">
    <property type="term" value="P:positive regulation of neuron differentiation"/>
    <property type="evidence" value="ECO:0000250"/>
    <property type="project" value="UniProtKB"/>
</dbReference>
<dbReference type="GO" id="GO:0097210">
    <property type="term" value="P:response to gonadotropin-releasing hormone"/>
    <property type="evidence" value="ECO:0000250"/>
    <property type="project" value="UniProtKB"/>
</dbReference>
<dbReference type="CDD" id="cd18946">
    <property type="entry name" value="bHLH_E-protein_TCF12_HEB"/>
    <property type="match status" value="1"/>
</dbReference>
<dbReference type="FunFam" id="4.10.280.10:FF:000001">
    <property type="entry name" value="Putative transcription factor 12"/>
    <property type="match status" value="1"/>
</dbReference>
<dbReference type="Gene3D" id="4.10.280.10">
    <property type="entry name" value="Helix-loop-helix DNA-binding domain"/>
    <property type="match status" value="1"/>
</dbReference>
<dbReference type="InterPro" id="IPR011598">
    <property type="entry name" value="bHLH_dom"/>
</dbReference>
<dbReference type="InterPro" id="IPR036638">
    <property type="entry name" value="HLH_DNA-bd_sf"/>
</dbReference>
<dbReference type="InterPro" id="IPR051098">
    <property type="entry name" value="NeuroDiff_E-box_TFs"/>
</dbReference>
<dbReference type="PANTHER" id="PTHR11793">
    <property type="entry name" value="BASIC HELIX-LOOP-HELIX TRANSCRIPTION FACTOR"/>
    <property type="match status" value="1"/>
</dbReference>
<dbReference type="PANTHER" id="PTHR11793:SF11">
    <property type="entry name" value="TRANSCRIPTION FACTOR 12"/>
    <property type="match status" value="1"/>
</dbReference>
<dbReference type="Pfam" id="PF00010">
    <property type="entry name" value="HLH"/>
    <property type="match status" value="1"/>
</dbReference>
<dbReference type="SMART" id="SM00353">
    <property type="entry name" value="HLH"/>
    <property type="match status" value="1"/>
</dbReference>
<dbReference type="SUPFAM" id="SSF47459">
    <property type="entry name" value="HLH, helix-loop-helix DNA-binding domain"/>
    <property type="match status" value="1"/>
</dbReference>
<dbReference type="PROSITE" id="PS50888">
    <property type="entry name" value="BHLH"/>
    <property type="match status" value="1"/>
</dbReference>